<name>RL2_LACLM</name>
<dbReference type="EMBL" id="AM406671">
    <property type="protein sequence ID" value="CAL98943.1"/>
    <property type="molecule type" value="Genomic_DNA"/>
</dbReference>
<dbReference type="RefSeq" id="WP_011677160.1">
    <property type="nucleotide sequence ID" value="NC_009004.1"/>
</dbReference>
<dbReference type="PDB" id="5MYJ">
    <property type="method" value="EM"/>
    <property type="resolution" value="5.60 A"/>
    <property type="chains" value="BD=1-276"/>
</dbReference>
<dbReference type="PDBsum" id="5MYJ"/>
<dbReference type="EMDB" id="EMD-3581"/>
<dbReference type="SMR" id="A2RNQ2"/>
<dbReference type="STRING" id="416870.llmg_2380"/>
<dbReference type="GeneID" id="61110424"/>
<dbReference type="KEGG" id="llm:llmg_2380"/>
<dbReference type="eggNOG" id="COG0090">
    <property type="taxonomic scope" value="Bacteria"/>
</dbReference>
<dbReference type="HOGENOM" id="CLU_036235_2_1_9"/>
<dbReference type="OrthoDB" id="9778722at2"/>
<dbReference type="PhylomeDB" id="A2RNQ2"/>
<dbReference type="Proteomes" id="UP000000364">
    <property type="component" value="Chromosome"/>
</dbReference>
<dbReference type="GO" id="GO:0015934">
    <property type="term" value="C:large ribosomal subunit"/>
    <property type="evidence" value="ECO:0007669"/>
    <property type="project" value="InterPro"/>
</dbReference>
<dbReference type="GO" id="GO:0019843">
    <property type="term" value="F:rRNA binding"/>
    <property type="evidence" value="ECO:0007669"/>
    <property type="project" value="UniProtKB-UniRule"/>
</dbReference>
<dbReference type="GO" id="GO:0003735">
    <property type="term" value="F:structural constituent of ribosome"/>
    <property type="evidence" value="ECO:0007669"/>
    <property type="project" value="InterPro"/>
</dbReference>
<dbReference type="GO" id="GO:0016740">
    <property type="term" value="F:transferase activity"/>
    <property type="evidence" value="ECO:0007669"/>
    <property type="project" value="InterPro"/>
</dbReference>
<dbReference type="GO" id="GO:0002181">
    <property type="term" value="P:cytoplasmic translation"/>
    <property type="evidence" value="ECO:0007669"/>
    <property type="project" value="TreeGrafter"/>
</dbReference>
<dbReference type="FunFam" id="2.30.30.30:FF:000001">
    <property type="entry name" value="50S ribosomal protein L2"/>
    <property type="match status" value="1"/>
</dbReference>
<dbReference type="FunFam" id="2.40.50.140:FF:000003">
    <property type="entry name" value="50S ribosomal protein L2"/>
    <property type="match status" value="1"/>
</dbReference>
<dbReference type="FunFam" id="4.10.950.10:FF:000001">
    <property type="entry name" value="50S ribosomal protein L2"/>
    <property type="match status" value="1"/>
</dbReference>
<dbReference type="Gene3D" id="2.30.30.30">
    <property type="match status" value="1"/>
</dbReference>
<dbReference type="Gene3D" id="2.40.50.140">
    <property type="entry name" value="Nucleic acid-binding proteins"/>
    <property type="match status" value="1"/>
</dbReference>
<dbReference type="Gene3D" id="4.10.950.10">
    <property type="entry name" value="Ribosomal protein L2, domain 3"/>
    <property type="match status" value="1"/>
</dbReference>
<dbReference type="HAMAP" id="MF_01320_B">
    <property type="entry name" value="Ribosomal_uL2_B"/>
    <property type="match status" value="1"/>
</dbReference>
<dbReference type="InterPro" id="IPR012340">
    <property type="entry name" value="NA-bd_OB-fold"/>
</dbReference>
<dbReference type="InterPro" id="IPR014722">
    <property type="entry name" value="Rib_uL2_dom2"/>
</dbReference>
<dbReference type="InterPro" id="IPR002171">
    <property type="entry name" value="Ribosomal_uL2"/>
</dbReference>
<dbReference type="InterPro" id="IPR005880">
    <property type="entry name" value="Ribosomal_uL2_bac/org-type"/>
</dbReference>
<dbReference type="InterPro" id="IPR022669">
    <property type="entry name" value="Ribosomal_uL2_C"/>
</dbReference>
<dbReference type="InterPro" id="IPR022671">
    <property type="entry name" value="Ribosomal_uL2_CS"/>
</dbReference>
<dbReference type="InterPro" id="IPR014726">
    <property type="entry name" value="Ribosomal_uL2_dom3"/>
</dbReference>
<dbReference type="InterPro" id="IPR022666">
    <property type="entry name" value="Ribosomal_uL2_RNA-bd_dom"/>
</dbReference>
<dbReference type="InterPro" id="IPR008991">
    <property type="entry name" value="Translation_prot_SH3-like_sf"/>
</dbReference>
<dbReference type="NCBIfam" id="TIGR01171">
    <property type="entry name" value="rplB_bact"/>
    <property type="match status" value="1"/>
</dbReference>
<dbReference type="PANTHER" id="PTHR13691:SF5">
    <property type="entry name" value="LARGE RIBOSOMAL SUBUNIT PROTEIN UL2M"/>
    <property type="match status" value="1"/>
</dbReference>
<dbReference type="PANTHER" id="PTHR13691">
    <property type="entry name" value="RIBOSOMAL PROTEIN L2"/>
    <property type="match status" value="1"/>
</dbReference>
<dbReference type="Pfam" id="PF00181">
    <property type="entry name" value="Ribosomal_L2"/>
    <property type="match status" value="1"/>
</dbReference>
<dbReference type="Pfam" id="PF03947">
    <property type="entry name" value="Ribosomal_L2_C"/>
    <property type="match status" value="1"/>
</dbReference>
<dbReference type="PIRSF" id="PIRSF002158">
    <property type="entry name" value="Ribosomal_L2"/>
    <property type="match status" value="1"/>
</dbReference>
<dbReference type="SMART" id="SM01383">
    <property type="entry name" value="Ribosomal_L2"/>
    <property type="match status" value="1"/>
</dbReference>
<dbReference type="SMART" id="SM01382">
    <property type="entry name" value="Ribosomal_L2_C"/>
    <property type="match status" value="1"/>
</dbReference>
<dbReference type="SUPFAM" id="SSF50249">
    <property type="entry name" value="Nucleic acid-binding proteins"/>
    <property type="match status" value="1"/>
</dbReference>
<dbReference type="SUPFAM" id="SSF50104">
    <property type="entry name" value="Translation proteins SH3-like domain"/>
    <property type="match status" value="1"/>
</dbReference>
<dbReference type="PROSITE" id="PS00467">
    <property type="entry name" value="RIBOSOMAL_L2"/>
    <property type="match status" value="1"/>
</dbReference>
<protein>
    <recommendedName>
        <fullName evidence="1">Large ribosomal subunit protein uL2</fullName>
    </recommendedName>
    <alternativeName>
        <fullName evidence="3">50S ribosomal protein L2</fullName>
    </alternativeName>
</protein>
<accession>A2RNQ2</accession>
<comment type="function">
    <text evidence="1">One of the primary rRNA binding proteins. Required for association of the 30S and 50S subunits to form the 70S ribosome, for tRNA binding and peptide bond formation. It has been suggested to have peptidyltransferase activity; this is somewhat controversial. Makes several contacts with the 16S rRNA in the 70S ribosome.</text>
</comment>
<comment type="subunit">
    <text evidence="1">Part of the 50S ribosomal subunit. Forms a bridge to the 30S subunit in the 70S ribosome.</text>
</comment>
<comment type="similarity">
    <text evidence="1">Belongs to the universal ribosomal protein uL2 family.</text>
</comment>
<gene>
    <name evidence="1" type="primary">rplB</name>
    <name type="ordered locus">llmg_2380</name>
</gene>
<sequence length="276" mass="29590">MGIKVYKPTTNGRRNMTGSDFAEITTSTPEKSLLVSMSKTAGRNNTGRITVRHHGGGHKRKYRMIDFKRTTDNVVAKVATIEYDPNRTANIALIVYANGVKSYILAAKGLEVGMTVVSGPDADIKVGNALPLANIPVGTLIHNIELKPGKGGQLVRSAGASAQVLGSEGKYTLVRLQSGEVRMILSTCRATIGVVGNEQQSLINLGKAGRTRHMGIRPTVRGSVMNPNDHPHGGGEGRQPVGRKSPMTPWGKPALGLKTRNKKAKSSKLIVRRIND</sequence>
<feature type="chain" id="PRO_0000309942" description="Large ribosomal subunit protein uL2">
    <location>
        <begin position="1"/>
        <end position="276"/>
    </location>
</feature>
<feature type="region of interest" description="Disordered" evidence="2">
    <location>
        <begin position="219"/>
        <end position="268"/>
    </location>
</feature>
<evidence type="ECO:0000255" key="1">
    <source>
        <dbReference type="HAMAP-Rule" id="MF_01320"/>
    </source>
</evidence>
<evidence type="ECO:0000256" key="2">
    <source>
        <dbReference type="SAM" id="MobiDB-lite"/>
    </source>
</evidence>
<evidence type="ECO:0000305" key="3"/>
<reference key="1">
    <citation type="journal article" date="2007" name="J. Bacteriol.">
        <title>The complete genome sequence of the lactic acid bacterial paradigm Lactococcus lactis subsp. cremoris MG1363.</title>
        <authorList>
            <person name="Wegmann U."/>
            <person name="O'Connell-Motherway M."/>
            <person name="Zomer A."/>
            <person name="Buist G."/>
            <person name="Shearman C."/>
            <person name="Canchaya C."/>
            <person name="Ventura M."/>
            <person name="Goesmann A."/>
            <person name="Gasson M.J."/>
            <person name="Kuipers O.P."/>
            <person name="van Sinderen D."/>
            <person name="Kok J."/>
        </authorList>
    </citation>
    <scope>NUCLEOTIDE SEQUENCE [LARGE SCALE GENOMIC DNA]</scope>
    <source>
        <strain>MG1363</strain>
    </source>
</reference>
<organism>
    <name type="scientific">Lactococcus lactis subsp. cremoris (strain MG1363)</name>
    <dbReference type="NCBI Taxonomy" id="416870"/>
    <lineage>
        <taxon>Bacteria</taxon>
        <taxon>Bacillati</taxon>
        <taxon>Bacillota</taxon>
        <taxon>Bacilli</taxon>
        <taxon>Lactobacillales</taxon>
        <taxon>Streptococcaceae</taxon>
        <taxon>Lactococcus</taxon>
        <taxon>Lactococcus cremoris subsp. cremoris</taxon>
    </lineage>
</organism>
<proteinExistence type="evidence at protein level"/>
<keyword id="KW-0002">3D-structure</keyword>
<keyword id="KW-0687">Ribonucleoprotein</keyword>
<keyword id="KW-0689">Ribosomal protein</keyword>
<keyword id="KW-0694">RNA-binding</keyword>
<keyword id="KW-0699">rRNA-binding</keyword>